<evidence type="ECO:0000255" key="1">
    <source>
        <dbReference type="HAMAP-Rule" id="MF_00017"/>
    </source>
</evidence>
<reference key="1">
    <citation type="journal article" date="2007" name="Genome Res.">
        <title>Genome characteristics of facultatively symbiotic Frankia sp. strains reflect host range and host plant biogeography.</title>
        <authorList>
            <person name="Normand P."/>
            <person name="Lapierre P."/>
            <person name="Tisa L.S."/>
            <person name="Gogarten J.P."/>
            <person name="Alloisio N."/>
            <person name="Bagnarol E."/>
            <person name="Bassi C.A."/>
            <person name="Berry A.M."/>
            <person name="Bickhart D.M."/>
            <person name="Choisne N."/>
            <person name="Couloux A."/>
            <person name="Cournoyer B."/>
            <person name="Cruveiller S."/>
            <person name="Daubin V."/>
            <person name="Demange N."/>
            <person name="Francino M.P."/>
            <person name="Goltsman E."/>
            <person name="Huang Y."/>
            <person name="Kopp O.R."/>
            <person name="Labarre L."/>
            <person name="Lapidus A."/>
            <person name="Lavire C."/>
            <person name="Marechal J."/>
            <person name="Martinez M."/>
            <person name="Mastronunzio J.E."/>
            <person name="Mullin B.C."/>
            <person name="Niemann J."/>
            <person name="Pujic P."/>
            <person name="Rawnsley T."/>
            <person name="Rouy Z."/>
            <person name="Schenowitz C."/>
            <person name="Sellstedt A."/>
            <person name="Tavares F."/>
            <person name="Tomkins J.P."/>
            <person name="Vallenet D."/>
            <person name="Valverde C."/>
            <person name="Wall L.G."/>
            <person name="Wang Y."/>
            <person name="Medigue C."/>
            <person name="Benson D.R."/>
        </authorList>
    </citation>
    <scope>NUCLEOTIDE SEQUENCE [LARGE SCALE GENOMIC DNA]</scope>
    <source>
        <strain>DSM 45818 / CECT 9043 / HFP020203 / CcI3</strain>
    </source>
</reference>
<keyword id="KW-0227">DNA damage</keyword>
<keyword id="KW-0233">DNA recombination</keyword>
<keyword id="KW-0234">DNA repair</keyword>
<keyword id="KW-0479">Metal-binding</keyword>
<keyword id="KW-1185">Reference proteome</keyword>
<keyword id="KW-0862">Zinc</keyword>
<keyword id="KW-0863">Zinc-finger</keyword>
<proteinExistence type="inferred from homology"/>
<comment type="function">
    <text evidence="1">May play a role in DNA repair. It seems to be involved in an RecBC-independent recombinational process of DNA repair. It may act with RecF and RecO.</text>
</comment>
<comment type="similarity">
    <text evidence="1">Belongs to the RecR family.</text>
</comment>
<sequence>MYEGIVQDLIDELGRLPGIGPKSAQRIAFHLLAADPVDVRRLATALTEVKEKVQFCRSCFNVAQSELCRICSDPRRDPSSICVVEEPKDVVAIERTREFRGRYHVLGGAINPIGGVGPDDLHIRELVARLADGTVTELILATDPNTEGEVTASYLARQIAPMGLKVTRLASGLPMGGDLEWADEVTLGRAFEGRRVVSA</sequence>
<protein>
    <recommendedName>
        <fullName evidence="1">Recombination protein RecR</fullName>
    </recommendedName>
</protein>
<name>RECR_FRACC</name>
<organism>
    <name type="scientific">Frankia casuarinae (strain DSM 45818 / CECT 9043 / HFP020203 / CcI3)</name>
    <dbReference type="NCBI Taxonomy" id="106370"/>
    <lineage>
        <taxon>Bacteria</taxon>
        <taxon>Bacillati</taxon>
        <taxon>Actinomycetota</taxon>
        <taxon>Actinomycetes</taxon>
        <taxon>Frankiales</taxon>
        <taxon>Frankiaceae</taxon>
        <taxon>Frankia</taxon>
    </lineage>
</organism>
<feature type="chain" id="PRO_0000322892" description="Recombination protein RecR">
    <location>
        <begin position="1"/>
        <end position="199"/>
    </location>
</feature>
<feature type="domain" description="Toprim" evidence="1">
    <location>
        <begin position="79"/>
        <end position="174"/>
    </location>
</feature>
<feature type="zinc finger region" description="C4-type" evidence="1">
    <location>
        <begin position="56"/>
        <end position="71"/>
    </location>
</feature>
<dbReference type="EMBL" id="CP000249">
    <property type="protein sequence ID" value="ABD09656.1"/>
    <property type="molecule type" value="Genomic_DNA"/>
</dbReference>
<dbReference type="RefSeq" id="WP_011434735.1">
    <property type="nucleotide sequence ID" value="NZ_LRTJ01000026.1"/>
</dbReference>
<dbReference type="SMR" id="Q2JGD6"/>
<dbReference type="STRING" id="106370.Francci3_0268"/>
<dbReference type="KEGG" id="fra:Francci3_0268"/>
<dbReference type="eggNOG" id="COG0353">
    <property type="taxonomic scope" value="Bacteria"/>
</dbReference>
<dbReference type="HOGENOM" id="CLU_060739_1_0_11"/>
<dbReference type="OrthoDB" id="9802672at2"/>
<dbReference type="PhylomeDB" id="Q2JGD6"/>
<dbReference type="Proteomes" id="UP000001937">
    <property type="component" value="Chromosome"/>
</dbReference>
<dbReference type="GO" id="GO:0003677">
    <property type="term" value="F:DNA binding"/>
    <property type="evidence" value="ECO:0007669"/>
    <property type="project" value="UniProtKB-UniRule"/>
</dbReference>
<dbReference type="GO" id="GO:0008270">
    <property type="term" value="F:zinc ion binding"/>
    <property type="evidence" value="ECO:0007669"/>
    <property type="project" value="UniProtKB-KW"/>
</dbReference>
<dbReference type="GO" id="GO:0006310">
    <property type="term" value="P:DNA recombination"/>
    <property type="evidence" value="ECO:0007669"/>
    <property type="project" value="UniProtKB-UniRule"/>
</dbReference>
<dbReference type="GO" id="GO:0006281">
    <property type="term" value="P:DNA repair"/>
    <property type="evidence" value="ECO:0007669"/>
    <property type="project" value="UniProtKB-UniRule"/>
</dbReference>
<dbReference type="CDD" id="cd01025">
    <property type="entry name" value="TOPRIM_recR"/>
    <property type="match status" value="1"/>
</dbReference>
<dbReference type="Gene3D" id="3.30.60.80">
    <property type="match status" value="1"/>
</dbReference>
<dbReference type="Gene3D" id="3.40.1360.10">
    <property type="match status" value="1"/>
</dbReference>
<dbReference type="Gene3D" id="6.10.250.240">
    <property type="match status" value="1"/>
</dbReference>
<dbReference type="Gene3D" id="1.10.8.420">
    <property type="entry name" value="RecR Domain 1"/>
    <property type="match status" value="1"/>
</dbReference>
<dbReference type="HAMAP" id="MF_00017">
    <property type="entry name" value="RecR"/>
    <property type="match status" value="1"/>
</dbReference>
<dbReference type="InterPro" id="IPR000093">
    <property type="entry name" value="DNA_Rcmb_RecR"/>
</dbReference>
<dbReference type="InterPro" id="IPR003583">
    <property type="entry name" value="Hlx-hairpin-Hlx_DNA-bd_motif"/>
</dbReference>
<dbReference type="InterPro" id="IPR023627">
    <property type="entry name" value="Rcmb_RecR"/>
</dbReference>
<dbReference type="InterPro" id="IPR015967">
    <property type="entry name" value="Rcmb_RecR_Znf"/>
</dbReference>
<dbReference type="InterPro" id="IPR006171">
    <property type="entry name" value="TOPRIM_dom"/>
</dbReference>
<dbReference type="InterPro" id="IPR034137">
    <property type="entry name" value="TOPRIM_RecR"/>
</dbReference>
<dbReference type="NCBIfam" id="TIGR00615">
    <property type="entry name" value="recR"/>
    <property type="match status" value="1"/>
</dbReference>
<dbReference type="PANTHER" id="PTHR30446">
    <property type="entry name" value="RECOMBINATION PROTEIN RECR"/>
    <property type="match status" value="1"/>
</dbReference>
<dbReference type="PANTHER" id="PTHR30446:SF0">
    <property type="entry name" value="RECOMBINATION PROTEIN RECR"/>
    <property type="match status" value="1"/>
</dbReference>
<dbReference type="Pfam" id="PF21175">
    <property type="entry name" value="RecR_C"/>
    <property type="match status" value="1"/>
</dbReference>
<dbReference type="Pfam" id="PF21176">
    <property type="entry name" value="RecR_HhH"/>
    <property type="match status" value="1"/>
</dbReference>
<dbReference type="Pfam" id="PF02132">
    <property type="entry name" value="RecR_ZnF"/>
    <property type="match status" value="1"/>
</dbReference>
<dbReference type="Pfam" id="PF13662">
    <property type="entry name" value="Toprim_4"/>
    <property type="match status" value="1"/>
</dbReference>
<dbReference type="SMART" id="SM00278">
    <property type="entry name" value="HhH1"/>
    <property type="match status" value="1"/>
</dbReference>
<dbReference type="SMART" id="SM00493">
    <property type="entry name" value="TOPRIM"/>
    <property type="match status" value="1"/>
</dbReference>
<dbReference type="SUPFAM" id="SSF111304">
    <property type="entry name" value="Recombination protein RecR"/>
    <property type="match status" value="1"/>
</dbReference>
<dbReference type="PROSITE" id="PS01300">
    <property type="entry name" value="RECR"/>
    <property type="match status" value="1"/>
</dbReference>
<dbReference type="PROSITE" id="PS50880">
    <property type="entry name" value="TOPRIM"/>
    <property type="match status" value="1"/>
</dbReference>
<gene>
    <name evidence="1" type="primary">recR</name>
    <name type="ordered locus">Francci3_0268</name>
</gene>
<accession>Q2JGD6</accession>